<accession>Q700M0</accession>
<proteinExistence type="evidence at protein level"/>
<gene>
    <name evidence="7" type="primary">HT1</name>
</gene>
<keyword id="KW-1003">Cell membrane</keyword>
<keyword id="KW-1015">Disulfide bond</keyword>
<keyword id="KW-0472">Membrane</keyword>
<keyword id="KW-0762">Sugar transport</keyword>
<keyword id="KW-0812">Transmembrane</keyword>
<keyword id="KW-1133">Transmembrane helix</keyword>
<keyword id="KW-0813">Transport</keyword>
<name>HXT1_PLAVI</name>
<evidence type="ECO:0000250" key="1">
    <source>
        <dbReference type="UniProtKB" id="Q7KWJ5"/>
    </source>
</evidence>
<evidence type="ECO:0000255" key="2"/>
<evidence type="ECO:0000269" key="3">
    <source>
    </source>
</evidence>
<evidence type="ECO:0000269" key="4">
    <source>
    </source>
</evidence>
<evidence type="ECO:0000303" key="5">
    <source>
    </source>
</evidence>
<evidence type="ECO:0000303" key="6">
    <source>
    </source>
</evidence>
<evidence type="ECO:0000305" key="7"/>
<evidence type="ECO:0000312" key="8">
    <source>
        <dbReference type="EMBL" id="CAF33349.1"/>
    </source>
</evidence>
<protein>
    <recommendedName>
        <fullName evidence="6">Hexose transporter 1</fullName>
        <shortName evidence="5">PvHT</shortName>
        <shortName evidence="6">PvHT1</shortName>
    </recommendedName>
</protein>
<feature type="chain" id="PRO_0000460196" description="Hexose transporter 1">
    <location>
        <begin position="1"/>
        <end position="503"/>
    </location>
</feature>
<feature type="topological domain" description="Cytoplasmic" evidence="7">
    <location>
        <begin position="1"/>
        <end position="26"/>
    </location>
</feature>
<feature type="transmembrane region" description="Helical" evidence="2">
    <location>
        <begin position="27"/>
        <end position="47"/>
    </location>
</feature>
<feature type="topological domain" description="Extracellular" evidence="7">
    <location>
        <begin position="48"/>
        <end position="76"/>
    </location>
</feature>
<feature type="transmembrane region" description="Helical" evidence="2">
    <location>
        <begin position="77"/>
        <end position="97"/>
    </location>
</feature>
<feature type="topological domain" description="Cytoplasmic" evidence="7">
    <location>
        <begin position="98"/>
        <end position="102"/>
    </location>
</feature>
<feature type="transmembrane region" description="Helical" evidence="2">
    <location>
        <begin position="103"/>
        <end position="123"/>
    </location>
</feature>
<feature type="topological domain" description="Extracellular" evidence="7">
    <location>
        <begin position="124"/>
        <end position="132"/>
    </location>
</feature>
<feature type="transmembrane region" description="Helical" evidence="2">
    <location>
        <begin position="133"/>
        <end position="153"/>
    </location>
</feature>
<feature type="topological domain" description="Cytoplasmic" evidence="7">
    <location>
        <begin position="154"/>
        <end position="163"/>
    </location>
</feature>
<feature type="transmembrane region" description="Helical" evidence="2">
    <location>
        <begin position="164"/>
        <end position="184"/>
    </location>
</feature>
<feature type="topological domain" description="Extracellular" evidence="7">
    <location>
        <begin position="185"/>
        <end position="205"/>
    </location>
</feature>
<feature type="transmembrane region" description="Helical" evidence="2">
    <location>
        <begin position="206"/>
        <end position="226"/>
    </location>
</feature>
<feature type="topological domain" description="Cytoplasmic" evidence="7">
    <location>
        <begin position="227"/>
        <end position="291"/>
    </location>
</feature>
<feature type="transmembrane region" description="Helical" evidence="2">
    <location>
        <begin position="292"/>
        <end position="312"/>
    </location>
</feature>
<feature type="topological domain" description="Extracellular" evidence="7">
    <location>
        <begin position="313"/>
        <end position="329"/>
    </location>
</feature>
<feature type="transmembrane region" description="Helical" evidence="2">
    <location>
        <begin position="330"/>
        <end position="350"/>
    </location>
</feature>
<feature type="topological domain" description="Cytoplasmic" evidence="7">
    <location>
        <begin position="351"/>
        <end position="356"/>
    </location>
</feature>
<feature type="transmembrane region" description="Helical" evidence="2">
    <location>
        <begin position="357"/>
        <end position="377"/>
    </location>
</feature>
<feature type="topological domain" description="Extracellular" evidence="7">
    <location>
        <begin position="378"/>
        <end position="391"/>
    </location>
</feature>
<feature type="transmembrane region" description="Helical" evidence="2">
    <location>
        <begin position="392"/>
        <end position="412"/>
    </location>
</feature>
<feature type="topological domain" description="Cytoplasmic" evidence="7">
    <location>
        <begin position="413"/>
        <end position="428"/>
    </location>
</feature>
<feature type="transmembrane region" description="Helical" evidence="2">
    <location>
        <begin position="429"/>
        <end position="449"/>
    </location>
</feature>
<feature type="topological domain" description="Extracellular" evidence="7">
    <location>
        <begin position="450"/>
        <end position="454"/>
    </location>
</feature>
<feature type="transmembrane region" description="Helical" evidence="2">
    <location>
        <begin position="455"/>
        <end position="475"/>
    </location>
</feature>
<feature type="topological domain" description="Cytoplasmic" evidence="7">
    <location>
        <begin position="476"/>
        <end position="503"/>
    </location>
</feature>
<feature type="binding site" evidence="1">
    <location>
        <position position="167"/>
    </location>
    <ligand>
        <name>alpha-D-glucose</name>
        <dbReference type="ChEBI" id="CHEBI:17925"/>
    </ligand>
</feature>
<feature type="binding site" evidence="1">
    <location>
        <position position="167"/>
    </location>
    <ligand>
        <name>beta-D-glucose</name>
        <dbReference type="ChEBI" id="CHEBI:15903"/>
    </ligand>
</feature>
<feature type="binding site" evidence="1">
    <location>
        <position position="303"/>
    </location>
    <ligand>
        <name>alpha-D-glucose</name>
        <dbReference type="ChEBI" id="CHEBI:17925"/>
    </ligand>
</feature>
<feature type="binding site" evidence="1">
    <location>
        <position position="303"/>
    </location>
    <ligand>
        <name>beta-D-glucose</name>
        <dbReference type="ChEBI" id="CHEBI:15903"/>
    </ligand>
</feature>
<feature type="binding site" evidence="1">
    <location>
        <position position="304"/>
    </location>
    <ligand>
        <name>alpha-D-glucose</name>
        <dbReference type="ChEBI" id="CHEBI:17925"/>
    </ligand>
</feature>
<feature type="binding site" evidence="1">
    <location>
        <position position="309"/>
    </location>
    <ligand>
        <name>alpha-D-glucose</name>
        <dbReference type="ChEBI" id="CHEBI:17925"/>
    </ligand>
</feature>
<feature type="binding site" evidence="1">
    <location>
        <position position="309"/>
    </location>
    <ligand>
        <name>beta-D-glucose</name>
        <dbReference type="ChEBI" id="CHEBI:15903"/>
    </ligand>
</feature>
<feature type="binding site" evidence="1">
    <location>
        <position position="339"/>
    </location>
    <ligand>
        <name>beta-D-glucose</name>
        <dbReference type="ChEBI" id="CHEBI:15903"/>
    </ligand>
</feature>
<feature type="binding site" evidence="1">
    <location>
        <position position="411"/>
    </location>
    <ligand>
        <name>alpha-D-glucose</name>
        <dbReference type="ChEBI" id="CHEBI:17925"/>
    </ligand>
</feature>
<feature type="disulfide bond" evidence="1">
    <location>
        <begin position="61"/>
        <end position="68"/>
    </location>
</feature>
<reference evidence="8" key="1">
    <citation type="journal article" date="2004" name="Biochem. J.">
        <title>Analysis of Plasmodium vivax hexose transporters and effects of a parasitocidal inhibitor.</title>
        <authorList>
            <person name="Joet T."/>
            <person name="Chotivanich K."/>
            <person name="Silamut K."/>
            <person name="Patel A.P."/>
            <person name="Morin C."/>
            <person name="Krishna S."/>
        </authorList>
    </citation>
    <scope>NUCLEOTIDE SEQUENCE [GENOMIC DNA]</scope>
    <scope>FUNCTION</scope>
    <scope>TRANSPORTER ACTIVITY</scope>
    <scope>ACTIVITY REGULATION</scope>
    <scope>BIOPHYSICOCHEMICAL PROPERTIES</scope>
    <source>
        <strain evidence="5">Salvador I</strain>
    </source>
</reference>
<reference key="2">
    <citation type="journal article" date="2023" name="Front. Cell. Infect. Microbiol.">
        <title>Functional characterization of Plasmodium vivax hexose transporter 1.</title>
        <authorList>
            <person name="Won J.Y."/>
            <person name="Mazigo E."/>
            <person name="Cha S.H."/>
            <person name="Han J.H."/>
        </authorList>
    </citation>
    <scope>FUNCTION</scope>
    <source>
        <strain evidence="6">North Korean</strain>
    </source>
</reference>
<organism evidence="8">
    <name type="scientific">Plasmodium vivax</name>
    <dbReference type="NCBI Taxonomy" id="5855"/>
    <lineage>
        <taxon>Eukaryota</taxon>
        <taxon>Sar</taxon>
        <taxon>Alveolata</taxon>
        <taxon>Apicomplexa</taxon>
        <taxon>Aconoidasida</taxon>
        <taxon>Haemosporida</taxon>
        <taxon>Plasmodiidae</taxon>
        <taxon>Plasmodium</taxon>
        <taxon>Plasmodium (Plasmodium)</taxon>
    </lineage>
</organism>
<dbReference type="EMBL" id="AJ629308">
    <property type="protein sequence ID" value="CAF33349.1"/>
    <property type="molecule type" value="Genomic_DNA"/>
</dbReference>
<dbReference type="SMR" id="Q700M0"/>
<dbReference type="VEuPathDB" id="PlasmoDB:PVP01_0420400"/>
<dbReference type="VEuPathDB" id="PlasmoDB:PVPAM_040031300"/>
<dbReference type="VEuPathDB" id="PlasmoDB:PVW1_040026900"/>
<dbReference type="VEuPathDB" id="PlasmoDB:PVX_003665"/>
<dbReference type="HOGENOM" id="CLU_001265_30_5_1"/>
<dbReference type="GO" id="GO:0005886">
    <property type="term" value="C:plasma membrane"/>
    <property type="evidence" value="ECO:0007669"/>
    <property type="project" value="UniProtKB-SubCell"/>
</dbReference>
<dbReference type="GO" id="GO:0015149">
    <property type="term" value="F:hexose transmembrane transporter activity"/>
    <property type="evidence" value="ECO:0007669"/>
    <property type="project" value="TreeGrafter"/>
</dbReference>
<dbReference type="Gene3D" id="1.20.1250.20">
    <property type="entry name" value="MFS general substrate transporter like domains"/>
    <property type="match status" value="1"/>
</dbReference>
<dbReference type="InterPro" id="IPR045263">
    <property type="entry name" value="GLUT"/>
</dbReference>
<dbReference type="InterPro" id="IPR020846">
    <property type="entry name" value="MFS_dom"/>
</dbReference>
<dbReference type="InterPro" id="IPR005828">
    <property type="entry name" value="MFS_sugar_transport-like"/>
</dbReference>
<dbReference type="InterPro" id="IPR036259">
    <property type="entry name" value="MFS_trans_sf"/>
</dbReference>
<dbReference type="InterPro" id="IPR003663">
    <property type="entry name" value="Sugar/inositol_transpt"/>
</dbReference>
<dbReference type="InterPro" id="IPR005829">
    <property type="entry name" value="Sugar_transporter_CS"/>
</dbReference>
<dbReference type="NCBIfam" id="TIGR00879">
    <property type="entry name" value="SP"/>
    <property type="match status" value="1"/>
</dbReference>
<dbReference type="PANTHER" id="PTHR23503:SF8">
    <property type="entry name" value="FACILITATED GLUCOSE TRANSPORTER PROTEIN 1"/>
    <property type="match status" value="1"/>
</dbReference>
<dbReference type="PANTHER" id="PTHR23503">
    <property type="entry name" value="SOLUTE CARRIER FAMILY 2"/>
    <property type="match status" value="1"/>
</dbReference>
<dbReference type="Pfam" id="PF00083">
    <property type="entry name" value="Sugar_tr"/>
    <property type="match status" value="1"/>
</dbReference>
<dbReference type="PRINTS" id="PR00171">
    <property type="entry name" value="SUGRTRNSPORT"/>
</dbReference>
<dbReference type="SUPFAM" id="SSF103473">
    <property type="entry name" value="MFS general substrate transporter"/>
    <property type="match status" value="1"/>
</dbReference>
<dbReference type="PROSITE" id="PS50850">
    <property type="entry name" value="MFS"/>
    <property type="match status" value="1"/>
</dbReference>
<dbReference type="PROSITE" id="PS51257">
    <property type="entry name" value="PROKAR_LIPOPROTEIN"/>
    <property type="match status" value="1"/>
</dbReference>
<dbReference type="PROSITE" id="PS00216">
    <property type="entry name" value="SUGAR_TRANSPORT_1"/>
    <property type="match status" value="1"/>
</dbReference>
<dbReference type="PROSITE" id="PS00217">
    <property type="entry name" value="SUGAR_TRANSPORT_2"/>
    <property type="match status" value="1"/>
</dbReference>
<comment type="function">
    <text evidence="1 3 4">Sodium-independent facilitative hexose transporter (PubMed:38282613). Can transport D-glucose and D-fructose (PubMed:15107012). Can transport D-mannose, D-galactose, D-xylose and D-glucosamine (By similarity).</text>
</comment>
<comment type="catalytic activity">
    <reaction evidence="3">
        <text>D-glucose(out) = D-glucose(in)</text>
        <dbReference type="Rhea" id="RHEA:60376"/>
        <dbReference type="ChEBI" id="CHEBI:4167"/>
    </reaction>
    <physiologicalReaction direction="left-to-right" evidence="7">
        <dbReference type="Rhea" id="RHEA:60377"/>
    </physiologicalReaction>
</comment>
<comment type="catalytic activity">
    <reaction evidence="1">
        <text>D-fructose(out) = D-fructose(in)</text>
        <dbReference type="Rhea" id="RHEA:60372"/>
        <dbReference type="ChEBI" id="CHEBI:37721"/>
    </reaction>
    <physiologicalReaction direction="left-to-right" evidence="7">
        <dbReference type="Rhea" id="RHEA:60373"/>
    </physiologicalReaction>
</comment>
<comment type="catalytic activity">
    <reaction evidence="1">
        <text>D-galactose(in) = D-galactose(out)</text>
        <dbReference type="Rhea" id="RHEA:34915"/>
        <dbReference type="ChEBI" id="CHEBI:4139"/>
    </reaction>
    <physiologicalReaction direction="right-to-left" evidence="7">
        <dbReference type="Rhea" id="RHEA:34917"/>
    </physiologicalReaction>
</comment>
<comment type="catalytic activity">
    <reaction evidence="1">
        <text>D-mannose(out) = D-mannose(in)</text>
        <dbReference type="Rhea" id="RHEA:78391"/>
        <dbReference type="ChEBI" id="CHEBI:4208"/>
    </reaction>
    <physiologicalReaction direction="left-to-right" evidence="7">
        <dbReference type="Rhea" id="RHEA:78392"/>
    </physiologicalReaction>
</comment>
<comment type="catalytic activity">
    <reaction evidence="1">
        <text>D-glucosamine(out) = D-glucosamine(in)</text>
        <dbReference type="Rhea" id="RHEA:78423"/>
        <dbReference type="ChEBI" id="CHEBI:58723"/>
    </reaction>
    <physiologicalReaction direction="left-to-right" evidence="7">
        <dbReference type="Rhea" id="RHEA:78424"/>
    </physiologicalReaction>
</comment>
<comment type="catalytic activity">
    <reaction evidence="1">
        <text>D-xylose(out) = D-xylose(in)</text>
        <dbReference type="Rhea" id="RHEA:78427"/>
        <dbReference type="ChEBI" id="CHEBI:53455"/>
    </reaction>
    <physiologicalReaction direction="left-to-right" evidence="7">
        <dbReference type="Rhea" id="RHEA:78428"/>
    </physiologicalReaction>
</comment>
<comment type="activity regulation">
    <text evidence="3">Inhibited by compound 3361 (3-O-((undec-10-en)-1-yl)-D-glucose).</text>
</comment>
<comment type="biophysicochemical properties">
    <kinetics>
        <KM evidence="3">0.52 mM for D-glucose</KM>
    </kinetics>
</comment>
<comment type="subunit">
    <text evidence="1">Homodimer.</text>
</comment>
<comment type="subcellular location">
    <subcellularLocation>
        <location evidence="1">Cell membrane</location>
        <topology evidence="2">Multi-pass membrane protein</topology>
    </subcellularLocation>
</comment>
<comment type="miscellaneous">
    <text evidence="3">Experiments with hexose analogs indicate that hydroxyl groups at positions C-3, C-4 and C-6 of glucose are important for high affinity interactions with HT1.</text>
</comment>
<comment type="similarity">
    <text evidence="7">Belongs to the major facilitator superfamily. Sugar transporter (TC 2.A.1.1) family.</text>
</comment>
<sequence length="503" mass="55961">MKKSSKEISPSQSLKNGGSDHFFNTSLMYVLAACLASFIFGYQVSVLNTIKNFIVIEFGWCTGNKVECDDSTLKSSFLLASVFIGAVVGSGFSDYLVQHGRRFSLLVIYNFFILVSILTSITHHFHTILFSRLLSGFGVGLITVSVPMYISEMTHKDKKGAYGVLHQLFITFGILVAVLLGMAMGEAPDAKSVDALGEFQKIWWRLMFFFPCLISILGIVLLTFFYKEETPYYLFENGKIEESKKILKKIYGTDNVDEPLKAIKDAVEQNEAAKKNSISLMRAMQIPSYRNVILLGCILSGLQQFTGINVLVSNSNELYKEFLSNKLITTLSVIMTVVNFLMTFPAIYIVEKLGRKTLLLCGCAGVTLAAFLPTAIANQIDRSSDLVRNLSIAATFVMIISFAVSYGPVLWIYLHEMFPSEIKDSAASLASLVNWVCAIIVVFPSDIIIKKSPTILFFIFSGMSILSFLFIFFFIKETKGGEIGTSPYITMEERQKHMGKSAV</sequence>